<accession>B7HFL2</accession>
<organism>
    <name type="scientific">Bacillus cereus (strain B4264)</name>
    <dbReference type="NCBI Taxonomy" id="405532"/>
    <lineage>
        <taxon>Bacteria</taxon>
        <taxon>Bacillati</taxon>
        <taxon>Bacillota</taxon>
        <taxon>Bacilli</taxon>
        <taxon>Bacillales</taxon>
        <taxon>Bacillaceae</taxon>
        <taxon>Bacillus</taxon>
        <taxon>Bacillus cereus group</taxon>
    </lineage>
</organism>
<reference key="1">
    <citation type="submission" date="2008-10" db="EMBL/GenBank/DDBJ databases">
        <title>Genome sequence of Bacillus cereus B4264.</title>
        <authorList>
            <person name="Dodson R.J."/>
            <person name="Durkin A.S."/>
            <person name="Rosovitz M.J."/>
            <person name="Rasko D.A."/>
            <person name="Hoffmaster A."/>
            <person name="Ravel J."/>
            <person name="Sutton G."/>
        </authorList>
    </citation>
    <scope>NUCLEOTIDE SEQUENCE [LARGE SCALE GENOMIC DNA]</scope>
    <source>
        <strain>B4264</strain>
    </source>
</reference>
<evidence type="ECO:0000255" key="1">
    <source>
        <dbReference type="HAMAP-Rule" id="MF_01218"/>
    </source>
</evidence>
<proteinExistence type="inferred from homology"/>
<feature type="chain" id="PRO_1000139095" description="Uracil phosphoribosyltransferase">
    <location>
        <begin position="1"/>
        <end position="209"/>
    </location>
</feature>
<feature type="binding site" evidence="1">
    <location>
        <position position="79"/>
    </location>
    <ligand>
        <name>5-phospho-alpha-D-ribose 1-diphosphate</name>
        <dbReference type="ChEBI" id="CHEBI:58017"/>
    </ligand>
</feature>
<feature type="binding site" evidence="1">
    <location>
        <position position="104"/>
    </location>
    <ligand>
        <name>5-phospho-alpha-D-ribose 1-diphosphate</name>
        <dbReference type="ChEBI" id="CHEBI:58017"/>
    </ligand>
</feature>
<feature type="binding site" evidence="1">
    <location>
        <begin position="131"/>
        <end position="139"/>
    </location>
    <ligand>
        <name>5-phospho-alpha-D-ribose 1-diphosphate</name>
        <dbReference type="ChEBI" id="CHEBI:58017"/>
    </ligand>
</feature>
<feature type="binding site" evidence="1">
    <location>
        <position position="194"/>
    </location>
    <ligand>
        <name>uracil</name>
        <dbReference type="ChEBI" id="CHEBI:17568"/>
    </ligand>
</feature>
<feature type="binding site" evidence="1">
    <location>
        <begin position="199"/>
        <end position="201"/>
    </location>
    <ligand>
        <name>uracil</name>
        <dbReference type="ChEBI" id="CHEBI:17568"/>
    </ligand>
</feature>
<feature type="binding site" evidence="1">
    <location>
        <position position="200"/>
    </location>
    <ligand>
        <name>5-phospho-alpha-D-ribose 1-diphosphate</name>
        <dbReference type="ChEBI" id="CHEBI:58017"/>
    </ligand>
</feature>
<sequence length="209" mass="22901">MGKLYVFDHPLIQHKITYIRDKNTGTKDFRELVDEVASLMAFEITRDLPLKDIEIETPVSKATTKVIAGKKLGLIPILRAGLGMVDGILKLIPAAKVGHVGLYRDPKTLQPVEYYVKLPTDVEERDFIVLDPMLATGGSAAEAINSLKKRGAKQIKLMCIVAAPEGVKVVQEEHPDVDIYVAALDEKLNDHGYVVPGLGDAGDRLFGTK</sequence>
<gene>
    <name evidence="1" type="primary">upp</name>
    <name type="ordered locus">BCB4264_A5437</name>
</gene>
<keyword id="KW-0021">Allosteric enzyme</keyword>
<keyword id="KW-0328">Glycosyltransferase</keyword>
<keyword id="KW-0342">GTP-binding</keyword>
<keyword id="KW-0460">Magnesium</keyword>
<keyword id="KW-0547">Nucleotide-binding</keyword>
<keyword id="KW-0808">Transferase</keyword>
<comment type="function">
    <text evidence="1">Catalyzes the conversion of uracil and 5-phospho-alpha-D-ribose 1-diphosphate (PRPP) to UMP and diphosphate.</text>
</comment>
<comment type="catalytic activity">
    <reaction evidence="1">
        <text>UMP + diphosphate = 5-phospho-alpha-D-ribose 1-diphosphate + uracil</text>
        <dbReference type="Rhea" id="RHEA:13017"/>
        <dbReference type="ChEBI" id="CHEBI:17568"/>
        <dbReference type="ChEBI" id="CHEBI:33019"/>
        <dbReference type="ChEBI" id="CHEBI:57865"/>
        <dbReference type="ChEBI" id="CHEBI:58017"/>
        <dbReference type="EC" id="2.4.2.9"/>
    </reaction>
</comment>
<comment type="cofactor">
    <cofactor evidence="1">
        <name>Mg(2+)</name>
        <dbReference type="ChEBI" id="CHEBI:18420"/>
    </cofactor>
    <text evidence="1">Binds 1 Mg(2+) ion per subunit. The magnesium is bound as Mg-PRPP.</text>
</comment>
<comment type="activity regulation">
    <text evidence="1">Allosterically activated by GTP.</text>
</comment>
<comment type="pathway">
    <text evidence="1">Pyrimidine metabolism; UMP biosynthesis via salvage pathway; UMP from uracil: step 1/1.</text>
</comment>
<comment type="similarity">
    <text evidence="1">Belongs to the UPRTase family.</text>
</comment>
<protein>
    <recommendedName>
        <fullName evidence="1">Uracil phosphoribosyltransferase</fullName>
        <ecNumber evidence="1">2.4.2.9</ecNumber>
    </recommendedName>
    <alternativeName>
        <fullName evidence="1">UMP pyrophosphorylase</fullName>
    </alternativeName>
    <alternativeName>
        <fullName evidence="1">UPRTase</fullName>
    </alternativeName>
</protein>
<dbReference type="EC" id="2.4.2.9" evidence="1"/>
<dbReference type="EMBL" id="CP001176">
    <property type="protein sequence ID" value="ACK60374.1"/>
    <property type="molecule type" value="Genomic_DNA"/>
</dbReference>
<dbReference type="RefSeq" id="WP_000517539.1">
    <property type="nucleotide sequence ID" value="NZ_VEHB01000004.1"/>
</dbReference>
<dbReference type="SMR" id="B7HFL2"/>
<dbReference type="GeneID" id="93005808"/>
<dbReference type="KEGG" id="bcb:BCB4264_A5437"/>
<dbReference type="HOGENOM" id="CLU_067096_2_2_9"/>
<dbReference type="UniPathway" id="UPA00574">
    <property type="reaction ID" value="UER00636"/>
</dbReference>
<dbReference type="Proteomes" id="UP000007096">
    <property type="component" value="Chromosome"/>
</dbReference>
<dbReference type="GO" id="GO:0005525">
    <property type="term" value="F:GTP binding"/>
    <property type="evidence" value="ECO:0007669"/>
    <property type="project" value="UniProtKB-KW"/>
</dbReference>
<dbReference type="GO" id="GO:0000287">
    <property type="term" value="F:magnesium ion binding"/>
    <property type="evidence" value="ECO:0007669"/>
    <property type="project" value="UniProtKB-UniRule"/>
</dbReference>
<dbReference type="GO" id="GO:0004845">
    <property type="term" value="F:uracil phosphoribosyltransferase activity"/>
    <property type="evidence" value="ECO:0007669"/>
    <property type="project" value="UniProtKB-UniRule"/>
</dbReference>
<dbReference type="GO" id="GO:0044206">
    <property type="term" value="P:UMP salvage"/>
    <property type="evidence" value="ECO:0007669"/>
    <property type="project" value="UniProtKB-UniRule"/>
</dbReference>
<dbReference type="GO" id="GO:0006223">
    <property type="term" value="P:uracil salvage"/>
    <property type="evidence" value="ECO:0007669"/>
    <property type="project" value="InterPro"/>
</dbReference>
<dbReference type="CDD" id="cd06223">
    <property type="entry name" value="PRTases_typeI"/>
    <property type="match status" value="1"/>
</dbReference>
<dbReference type="FunFam" id="3.40.50.2020:FF:000003">
    <property type="entry name" value="Uracil phosphoribosyltransferase"/>
    <property type="match status" value="1"/>
</dbReference>
<dbReference type="Gene3D" id="3.40.50.2020">
    <property type="match status" value="1"/>
</dbReference>
<dbReference type="HAMAP" id="MF_01218_B">
    <property type="entry name" value="Upp_B"/>
    <property type="match status" value="1"/>
</dbReference>
<dbReference type="InterPro" id="IPR000836">
    <property type="entry name" value="PRibTrfase_dom"/>
</dbReference>
<dbReference type="InterPro" id="IPR029057">
    <property type="entry name" value="PRTase-like"/>
</dbReference>
<dbReference type="InterPro" id="IPR034332">
    <property type="entry name" value="Upp_B"/>
</dbReference>
<dbReference type="InterPro" id="IPR050054">
    <property type="entry name" value="UPRTase/APRTase"/>
</dbReference>
<dbReference type="InterPro" id="IPR005765">
    <property type="entry name" value="Ura_phspho_trans"/>
</dbReference>
<dbReference type="NCBIfam" id="NF001097">
    <property type="entry name" value="PRK00129.1"/>
    <property type="match status" value="1"/>
</dbReference>
<dbReference type="NCBIfam" id="TIGR01091">
    <property type="entry name" value="upp"/>
    <property type="match status" value="1"/>
</dbReference>
<dbReference type="PANTHER" id="PTHR32315">
    <property type="entry name" value="ADENINE PHOSPHORIBOSYLTRANSFERASE"/>
    <property type="match status" value="1"/>
</dbReference>
<dbReference type="PANTHER" id="PTHR32315:SF4">
    <property type="entry name" value="URACIL PHOSPHORIBOSYLTRANSFERASE, CHLOROPLASTIC"/>
    <property type="match status" value="1"/>
</dbReference>
<dbReference type="Pfam" id="PF14681">
    <property type="entry name" value="UPRTase"/>
    <property type="match status" value="1"/>
</dbReference>
<dbReference type="SUPFAM" id="SSF53271">
    <property type="entry name" value="PRTase-like"/>
    <property type="match status" value="1"/>
</dbReference>
<name>UPP_BACC4</name>